<sequence length="543" mass="59528">MLIKSQRLTLFSPLLSKTRRIPVNSHQTLVAESVITRRTLGAITATPSFHKNPVVIRRRIKLERVTRNCVRIDREIDEEEEEEEKERGDLVKQSIWEQMKEIVKFTGPAMGMWICGPLMSLIDTVVIGQGSSIELAALGPGTVLCDHMSYVFMFLSVATSNMVATSLAKQDKKEAQHQISVLLFIGLVCGLMMLLLTRLFGPWAVTAFTRGKNIEIVPAANKYIQIRGLAWPFILVGLVAQSASLGMKNSWGPLKALAAATIINGLGDTILCLFLGQGIAGAAWATTASQIVSAYMMMDSLNKEGYNAYSFAIPSPQELWKISALAAPVFISIFSKIAFYSFIIYCATSMGTHVLAAHQVMAQTYRMCNVWGEPLSQTAQSFMPEMLYGANRNLPKARTLLKSLMIIGATLGLVLGVIGTAVPGLFPGVYTHDKVIISEMHRLLIPFFMALSALPMTVSLEGTLLAGRDLKFVSSVMSSSFIIGCLTLMFVTRSGYGLLGCWFVLVGFQWGRFGLYLRRLLSPGGILNSDGPSPYTVEKIKSI</sequence>
<feature type="transit peptide" description="Chloroplast" evidence="1">
    <location>
        <begin position="1"/>
        <end position="30"/>
    </location>
</feature>
<feature type="chain" id="PRO_0000164259" description="Protein DETOXIFICATION 47, chloroplastic">
    <location>
        <begin position="31"/>
        <end position="543"/>
    </location>
</feature>
<feature type="transmembrane region" description="Helical" evidence="1">
    <location>
        <begin position="107"/>
        <end position="127"/>
    </location>
</feature>
<feature type="transmembrane region" description="Helical" evidence="1">
    <location>
        <begin position="135"/>
        <end position="155"/>
    </location>
</feature>
<feature type="transmembrane region" description="Helical" evidence="1">
    <location>
        <begin position="181"/>
        <end position="201"/>
    </location>
</feature>
<feature type="transmembrane region" description="Helical" evidence="1">
    <location>
        <begin position="228"/>
        <end position="248"/>
    </location>
</feature>
<feature type="transmembrane region" description="Helical" evidence="1">
    <location>
        <begin position="256"/>
        <end position="276"/>
    </location>
</feature>
<feature type="transmembrane region" description="Helical" evidence="1">
    <location>
        <begin position="278"/>
        <end position="298"/>
    </location>
</feature>
<feature type="transmembrane region" description="Helical" evidence="1">
    <location>
        <begin position="319"/>
        <end position="339"/>
    </location>
</feature>
<feature type="transmembrane region" description="Helical" evidence="1">
    <location>
        <begin position="342"/>
        <end position="362"/>
    </location>
</feature>
<feature type="transmembrane region" description="Helical" evidence="1">
    <location>
        <begin position="406"/>
        <end position="426"/>
    </location>
</feature>
<feature type="transmembrane region" description="Helical" evidence="1">
    <location>
        <begin position="443"/>
        <end position="463"/>
    </location>
</feature>
<feature type="transmembrane region" description="Helical" evidence="1">
    <location>
        <begin position="472"/>
        <end position="492"/>
    </location>
</feature>
<feature type="transmembrane region" description="Helical" evidence="1">
    <location>
        <begin position="497"/>
        <end position="517"/>
    </location>
</feature>
<feature type="coiled-coil region" evidence="1">
    <location>
        <begin position="55"/>
        <end position="94"/>
    </location>
</feature>
<gene>
    <name evidence="12" type="primary">DTX47</name>
    <name evidence="16" type="synonym">EDS5</name>
    <name evidence="13" type="synonym">IAP1</name>
    <name evidence="15" type="synonym">SCORD3</name>
    <name evidence="11" type="synonym">SID1</name>
    <name evidence="18" type="ordered locus">At4g39030</name>
    <name evidence="19" type="ORF">F19H22.130</name>
</gene>
<keyword id="KW-0150">Chloroplast</keyword>
<keyword id="KW-0175">Coiled coil</keyword>
<keyword id="KW-0391">Immunity</keyword>
<keyword id="KW-0399">Innate immunity</keyword>
<keyword id="KW-0472">Membrane</keyword>
<keyword id="KW-0611">Plant defense</keyword>
<keyword id="KW-0934">Plastid</keyword>
<keyword id="KW-1185">Reference proteome</keyword>
<keyword id="KW-0809">Transit peptide</keyword>
<keyword id="KW-0812">Transmembrane</keyword>
<keyword id="KW-1133">Transmembrane helix</keyword>
<keyword id="KW-0813">Transport</keyword>
<name>DTX47_ARATH</name>
<comment type="function">
    <text evidence="3 4 5 8 9">Functions as a multidrug and toxin extrusion transporter in the export of salicylic acid (SA) from the chloroplast to the cytoplasm (PubMed:23757404). Plays an essential function in plant defense via the pathogen-induced salicylic acid (SA) accumulation (PubMed:11826312, PubMed:24594657). Also acts as a key component of the Age-related resistance (ARR) pathway (PubMed:11884688, PubMed:19694953, PubMed:24594657).</text>
</comment>
<comment type="subcellular location">
    <subcellularLocation>
        <location evidence="7 8">Plastid</location>
        <location evidence="7 8">Chloroplast membrane</location>
        <topology evidence="7 8">Multi-pass membrane protein</topology>
    </subcellularLocation>
</comment>
<comment type="tissue specificity">
    <text evidence="7">Preferentially expressed in the epidermal cells.</text>
</comment>
<comment type="induction">
    <text evidence="3">By salicylic acid, UV-C light and pathogens.</text>
</comment>
<comment type="disruption phenotype">
    <text evidence="2 4 5 6 9 10">Enhanced susceptibility to several bacterial pathogens and alterations in PR-1 gene expression (PubMed:9090877). No salicylic acid (SA) accumulation after pathogen inoculation and more susceptibility to both virulent and avirulent forms of Pseudomonas syringae and Peronospora parasitica (PubMed:10449575, PubMed:24594657). Age-related resistance (ARR)-defective (PubMed:11884688, PubMed:19694953). Defect in stomatal response during bacterial infection (PubMed:21998587).</text>
</comment>
<comment type="similarity">
    <text evidence="17">Belongs to the multi antimicrobial extrusion (MATE) (TC 2.A.66.1) family.</text>
</comment>
<comment type="sequence caution" evidence="17">
    <conflict type="erroneous gene model prediction">
        <sequence resource="EMBL-CDS" id="CAB38823"/>
    </conflict>
</comment>
<comment type="sequence caution" evidence="17">
    <conflict type="erroneous gene model prediction">
        <sequence resource="EMBL-CDS" id="CAB80566"/>
    </conflict>
</comment>
<dbReference type="EMBL" id="AF416569">
    <property type="protein sequence ID" value="AAL27003.1"/>
    <property type="molecule type" value="mRNA"/>
</dbReference>
<dbReference type="EMBL" id="AL035679">
    <property type="protein sequence ID" value="CAB38823.1"/>
    <property type="status" value="ALT_SEQ"/>
    <property type="molecule type" value="Genomic_DNA"/>
</dbReference>
<dbReference type="EMBL" id="AL161594">
    <property type="protein sequence ID" value="CAB80566.1"/>
    <property type="status" value="ALT_SEQ"/>
    <property type="molecule type" value="Genomic_DNA"/>
</dbReference>
<dbReference type="EMBL" id="CP002687">
    <property type="protein sequence ID" value="AEE87009.1"/>
    <property type="molecule type" value="Genomic_DNA"/>
</dbReference>
<dbReference type="EMBL" id="AK175482">
    <property type="protein sequence ID" value="BAD43245.1"/>
    <property type="molecule type" value="mRNA"/>
</dbReference>
<dbReference type="EMBL" id="AK176074">
    <property type="protein sequence ID" value="BAD43837.1"/>
    <property type="molecule type" value="mRNA"/>
</dbReference>
<dbReference type="EMBL" id="AK176272">
    <property type="protein sequence ID" value="BAD44035.1"/>
    <property type="molecule type" value="mRNA"/>
</dbReference>
<dbReference type="EMBL" id="AK176334">
    <property type="protein sequence ID" value="BAD44097.1"/>
    <property type="molecule type" value="mRNA"/>
</dbReference>
<dbReference type="RefSeq" id="NP_195614.2">
    <property type="nucleotide sequence ID" value="NM_120063.6"/>
</dbReference>
<dbReference type="SMR" id="Q945F0"/>
<dbReference type="BioGRID" id="15338">
    <property type="interactions" value="26"/>
</dbReference>
<dbReference type="IntAct" id="Q945F0">
    <property type="interactions" value="24"/>
</dbReference>
<dbReference type="STRING" id="3702.Q945F0"/>
<dbReference type="TCDB" id="2.A.66.1.11">
    <property type="family name" value="the multidrug/oligosaccharidyl-lipid/polysaccharide (mop) flippase superfamily"/>
</dbReference>
<dbReference type="GlyGen" id="Q945F0">
    <property type="glycosylation" value="1 site"/>
</dbReference>
<dbReference type="SwissPalm" id="Q945F0"/>
<dbReference type="PaxDb" id="3702-AT4G39030.1"/>
<dbReference type="ProteomicsDB" id="221828"/>
<dbReference type="EnsemblPlants" id="AT4G39030.1">
    <property type="protein sequence ID" value="AT4G39030.1"/>
    <property type="gene ID" value="AT4G39030"/>
</dbReference>
<dbReference type="GeneID" id="830058"/>
<dbReference type="Gramene" id="AT4G39030.1">
    <property type="protein sequence ID" value="AT4G39030.1"/>
    <property type="gene ID" value="AT4G39030"/>
</dbReference>
<dbReference type="KEGG" id="ath:AT4G39030"/>
<dbReference type="Araport" id="AT4G39030"/>
<dbReference type="TAIR" id="AT4G39030">
    <property type="gene designation" value="EDS5"/>
</dbReference>
<dbReference type="eggNOG" id="KOG1347">
    <property type="taxonomic scope" value="Eukaryota"/>
</dbReference>
<dbReference type="HOGENOM" id="CLU_012893_15_2_1"/>
<dbReference type="InParanoid" id="Q945F0"/>
<dbReference type="OMA" id="IVSAYMM"/>
<dbReference type="OrthoDB" id="423427at2759"/>
<dbReference type="PhylomeDB" id="Q945F0"/>
<dbReference type="PRO" id="PR:Q945F0"/>
<dbReference type="Proteomes" id="UP000006548">
    <property type="component" value="Chromosome 4"/>
</dbReference>
<dbReference type="ExpressionAtlas" id="Q945F0">
    <property type="expression patterns" value="baseline and differential"/>
</dbReference>
<dbReference type="GO" id="GO:0009941">
    <property type="term" value="C:chloroplast envelope"/>
    <property type="evidence" value="ECO:0000314"/>
    <property type="project" value="UniProtKB"/>
</dbReference>
<dbReference type="GO" id="GO:0031969">
    <property type="term" value="C:chloroplast membrane"/>
    <property type="evidence" value="ECO:0007669"/>
    <property type="project" value="UniProtKB-SubCell"/>
</dbReference>
<dbReference type="GO" id="GO:0009536">
    <property type="term" value="C:plastid"/>
    <property type="evidence" value="ECO:0007005"/>
    <property type="project" value="TAIR"/>
</dbReference>
<dbReference type="GO" id="GO:0015297">
    <property type="term" value="F:antiporter activity"/>
    <property type="evidence" value="ECO:0007669"/>
    <property type="project" value="InterPro"/>
</dbReference>
<dbReference type="GO" id="GO:0042910">
    <property type="term" value="F:xenobiotic transmembrane transporter activity"/>
    <property type="evidence" value="ECO:0007669"/>
    <property type="project" value="InterPro"/>
</dbReference>
<dbReference type="GO" id="GO:0006952">
    <property type="term" value="P:defense response"/>
    <property type="evidence" value="ECO:0000304"/>
    <property type="project" value="TAIR"/>
</dbReference>
<dbReference type="GO" id="GO:0042742">
    <property type="term" value="P:defense response to bacterium"/>
    <property type="evidence" value="ECO:0000315"/>
    <property type="project" value="TAIR"/>
</dbReference>
<dbReference type="GO" id="GO:0045087">
    <property type="term" value="P:innate immune response"/>
    <property type="evidence" value="ECO:0000315"/>
    <property type="project" value="UniProtKB"/>
</dbReference>
<dbReference type="GO" id="GO:0031348">
    <property type="term" value="P:negative regulation of defense response"/>
    <property type="evidence" value="ECO:0000315"/>
    <property type="project" value="TAIR"/>
</dbReference>
<dbReference type="GO" id="GO:0009624">
    <property type="term" value="P:response to nematode"/>
    <property type="evidence" value="ECO:0007007"/>
    <property type="project" value="TAIR"/>
</dbReference>
<dbReference type="GO" id="GO:0009751">
    <property type="term" value="P:response to salicylic acid"/>
    <property type="evidence" value="ECO:0000270"/>
    <property type="project" value="UniProtKB"/>
</dbReference>
<dbReference type="GO" id="GO:0009697">
    <property type="term" value="P:salicylic acid biosynthetic process"/>
    <property type="evidence" value="ECO:0000314"/>
    <property type="project" value="UniProtKB"/>
</dbReference>
<dbReference type="CDD" id="cd13136">
    <property type="entry name" value="MATE_DinF_like"/>
    <property type="match status" value="1"/>
</dbReference>
<dbReference type="InterPro" id="IPR044644">
    <property type="entry name" value="DinF-like"/>
</dbReference>
<dbReference type="InterPro" id="IPR002528">
    <property type="entry name" value="MATE_fam"/>
</dbReference>
<dbReference type="NCBIfam" id="TIGR00797">
    <property type="entry name" value="matE"/>
    <property type="match status" value="1"/>
</dbReference>
<dbReference type="PANTHER" id="PTHR42893">
    <property type="entry name" value="PROTEIN DETOXIFICATION 44, CHLOROPLASTIC-RELATED"/>
    <property type="match status" value="1"/>
</dbReference>
<dbReference type="PANTHER" id="PTHR42893:SF47">
    <property type="entry name" value="PROTEIN DETOXIFICATION 47, CHLOROPLASTIC"/>
    <property type="match status" value="1"/>
</dbReference>
<dbReference type="Pfam" id="PF01554">
    <property type="entry name" value="MatE"/>
    <property type="match status" value="1"/>
</dbReference>
<evidence type="ECO:0000255" key="1"/>
<evidence type="ECO:0000269" key="2">
    <source>
    </source>
</evidence>
<evidence type="ECO:0000269" key="3">
    <source>
    </source>
</evidence>
<evidence type="ECO:0000269" key="4">
    <source>
    </source>
</evidence>
<evidence type="ECO:0000269" key="5">
    <source>
    </source>
</evidence>
<evidence type="ECO:0000269" key="6">
    <source>
    </source>
</evidence>
<evidence type="ECO:0000269" key="7">
    <source>
    </source>
</evidence>
<evidence type="ECO:0000269" key="8">
    <source>
    </source>
</evidence>
<evidence type="ECO:0000269" key="9">
    <source>
    </source>
</evidence>
<evidence type="ECO:0000269" key="10">
    <source>
    </source>
</evidence>
<evidence type="ECO:0000303" key="11">
    <source>
    </source>
</evidence>
<evidence type="ECO:0000303" key="12">
    <source>
    </source>
</evidence>
<evidence type="ECO:0000303" key="13">
    <source>
    </source>
</evidence>
<evidence type="ECO:0000303" key="14">
    <source>
    </source>
</evidence>
<evidence type="ECO:0000303" key="15">
    <source>
    </source>
</evidence>
<evidence type="ECO:0000303" key="16">
    <source>
    </source>
</evidence>
<evidence type="ECO:0000305" key="17"/>
<evidence type="ECO:0000312" key="18">
    <source>
        <dbReference type="Araport" id="AT4G39030"/>
    </source>
</evidence>
<evidence type="ECO:0000312" key="19">
    <source>
        <dbReference type="EMBL" id="CAB38823.1"/>
    </source>
</evidence>
<protein>
    <recommendedName>
        <fullName evidence="12">Protein DETOXIFICATION 47, chloroplastic</fullName>
        <shortName evidence="12">AtDTX47</shortName>
    </recommendedName>
    <alternativeName>
        <fullName evidence="17">Multidrug and toxic compound extrusion protein 47</fullName>
        <shortName evidence="17">MATE protein 47</shortName>
    </alternativeName>
    <alternativeName>
        <fullName evidence="16">Protein ENHANCED DISEASE SUSCEPTIBILITY 5</fullName>
        <shortName evidence="16">Protein EDS5</shortName>
    </alternativeName>
    <alternativeName>
        <fullName evidence="13">Protein IMPORTANT FOR THE ARR PATHWAY 1</fullName>
        <shortName evidence="13">Protein IAP1</shortName>
    </alternativeName>
    <alternativeName>
        <fullName evidence="11">Protein SALICYLIC ACID INDUCTION DEFICIENT 1</fullName>
        <shortName evidence="11">Protein SID1</shortName>
    </alternativeName>
    <alternativeName>
        <fullName>Protein SUSCEPTIBLE TO CORONATINE-DEFICIENT PST DC3000 3</fullName>
        <shortName evidence="14">Protein SCORD3</shortName>
    </alternativeName>
</protein>
<proteinExistence type="evidence at transcript level"/>
<reference key="1">
    <citation type="journal article" date="2002" name="Plant Cell">
        <title>EDS5, an essential component of salicylic acid-dependent signaling for disease resistance in Arabidopsis, is a member of the MATE transporter family.</title>
        <authorList>
            <person name="Nawrath C."/>
            <person name="Heck S."/>
            <person name="Parinthawong N."/>
            <person name="Metraux J.-P."/>
        </authorList>
    </citation>
    <scope>NUCLEOTIDE SEQUENCE [MRNA]</scope>
    <scope>FUNCTION</scope>
    <scope>INDUCTION</scope>
    <source>
        <strain>cv. Columbia</strain>
        <strain>cv. Landsberg erecta</strain>
    </source>
</reference>
<reference key="2">
    <citation type="journal article" date="1999" name="Nature">
        <title>Sequence and analysis of chromosome 4 of the plant Arabidopsis thaliana.</title>
        <authorList>
            <person name="Mayer K.F.X."/>
            <person name="Schueller C."/>
            <person name="Wambutt R."/>
            <person name="Murphy G."/>
            <person name="Volckaert G."/>
            <person name="Pohl T."/>
            <person name="Duesterhoeft A."/>
            <person name="Stiekema W."/>
            <person name="Entian K.-D."/>
            <person name="Terryn N."/>
            <person name="Harris B."/>
            <person name="Ansorge W."/>
            <person name="Brandt P."/>
            <person name="Grivell L.A."/>
            <person name="Rieger M."/>
            <person name="Weichselgartner M."/>
            <person name="de Simone V."/>
            <person name="Obermaier B."/>
            <person name="Mache R."/>
            <person name="Mueller M."/>
            <person name="Kreis M."/>
            <person name="Delseny M."/>
            <person name="Puigdomenech P."/>
            <person name="Watson M."/>
            <person name="Schmidtheini T."/>
            <person name="Reichert B."/>
            <person name="Portetelle D."/>
            <person name="Perez-Alonso M."/>
            <person name="Boutry M."/>
            <person name="Bancroft I."/>
            <person name="Vos P."/>
            <person name="Hoheisel J."/>
            <person name="Zimmermann W."/>
            <person name="Wedler H."/>
            <person name="Ridley P."/>
            <person name="Langham S.-A."/>
            <person name="McCullagh B."/>
            <person name="Bilham L."/>
            <person name="Robben J."/>
            <person name="van der Schueren J."/>
            <person name="Grymonprez B."/>
            <person name="Chuang Y.-J."/>
            <person name="Vandenbussche F."/>
            <person name="Braeken M."/>
            <person name="Weltjens I."/>
            <person name="Voet M."/>
            <person name="Bastiaens I."/>
            <person name="Aert R."/>
            <person name="Defoor E."/>
            <person name="Weitzenegger T."/>
            <person name="Bothe G."/>
            <person name="Ramsperger U."/>
            <person name="Hilbert H."/>
            <person name="Braun M."/>
            <person name="Holzer E."/>
            <person name="Brandt A."/>
            <person name="Peters S."/>
            <person name="van Staveren M."/>
            <person name="Dirkse W."/>
            <person name="Mooijman P."/>
            <person name="Klein Lankhorst R."/>
            <person name="Rose M."/>
            <person name="Hauf J."/>
            <person name="Koetter P."/>
            <person name="Berneiser S."/>
            <person name="Hempel S."/>
            <person name="Feldpausch M."/>
            <person name="Lamberth S."/>
            <person name="Van den Daele H."/>
            <person name="De Keyser A."/>
            <person name="Buysshaert C."/>
            <person name="Gielen J."/>
            <person name="Villarroel R."/>
            <person name="De Clercq R."/>
            <person name="van Montagu M."/>
            <person name="Rogers J."/>
            <person name="Cronin A."/>
            <person name="Quail M.A."/>
            <person name="Bray-Allen S."/>
            <person name="Clark L."/>
            <person name="Doggett J."/>
            <person name="Hall S."/>
            <person name="Kay M."/>
            <person name="Lennard N."/>
            <person name="McLay K."/>
            <person name="Mayes R."/>
            <person name="Pettett A."/>
            <person name="Rajandream M.A."/>
            <person name="Lyne M."/>
            <person name="Benes V."/>
            <person name="Rechmann S."/>
            <person name="Borkova D."/>
            <person name="Bloecker H."/>
            <person name="Scharfe M."/>
            <person name="Grimm M."/>
            <person name="Loehnert T.-H."/>
            <person name="Dose S."/>
            <person name="de Haan M."/>
            <person name="Maarse A.C."/>
            <person name="Schaefer M."/>
            <person name="Mueller-Auer S."/>
            <person name="Gabel C."/>
            <person name="Fuchs M."/>
            <person name="Fartmann B."/>
            <person name="Granderath K."/>
            <person name="Dauner D."/>
            <person name="Herzl A."/>
            <person name="Neumann S."/>
            <person name="Argiriou A."/>
            <person name="Vitale D."/>
            <person name="Liguori R."/>
            <person name="Piravandi E."/>
            <person name="Massenet O."/>
            <person name="Quigley F."/>
            <person name="Clabauld G."/>
            <person name="Muendlein A."/>
            <person name="Felber R."/>
            <person name="Schnabl S."/>
            <person name="Hiller R."/>
            <person name="Schmidt W."/>
            <person name="Lecharny A."/>
            <person name="Aubourg S."/>
            <person name="Chefdor F."/>
            <person name="Cooke R."/>
            <person name="Berger C."/>
            <person name="Monfort A."/>
            <person name="Casacuberta E."/>
            <person name="Gibbons T."/>
            <person name="Weber N."/>
            <person name="Vandenbol M."/>
            <person name="Bargues M."/>
            <person name="Terol J."/>
            <person name="Torres A."/>
            <person name="Perez-Perez A."/>
            <person name="Purnelle B."/>
            <person name="Bent E."/>
            <person name="Johnson S."/>
            <person name="Tacon D."/>
            <person name="Jesse T."/>
            <person name="Heijnen L."/>
            <person name="Schwarz S."/>
            <person name="Scholler P."/>
            <person name="Heber S."/>
            <person name="Francs P."/>
            <person name="Bielke C."/>
            <person name="Frishman D."/>
            <person name="Haase D."/>
            <person name="Lemcke K."/>
            <person name="Mewes H.-W."/>
            <person name="Stocker S."/>
            <person name="Zaccaria P."/>
            <person name="Bevan M."/>
            <person name="Wilson R.K."/>
            <person name="de la Bastide M."/>
            <person name="Habermann K."/>
            <person name="Parnell L."/>
            <person name="Dedhia N."/>
            <person name="Gnoj L."/>
            <person name="Schutz K."/>
            <person name="Huang E."/>
            <person name="Spiegel L."/>
            <person name="Sekhon M."/>
            <person name="Murray J."/>
            <person name="Sheet P."/>
            <person name="Cordes M."/>
            <person name="Abu-Threideh J."/>
            <person name="Stoneking T."/>
            <person name="Kalicki J."/>
            <person name="Graves T."/>
            <person name="Harmon G."/>
            <person name="Edwards J."/>
            <person name="Latreille P."/>
            <person name="Courtney L."/>
            <person name="Cloud J."/>
            <person name="Abbott A."/>
            <person name="Scott K."/>
            <person name="Johnson D."/>
            <person name="Minx P."/>
            <person name="Bentley D."/>
            <person name="Fulton B."/>
            <person name="Miller N."/>
            <person name="Greco T."/>
            <person name="Kemp K."/>
            <person name="Kramer J."/>
            <person name="Fulton L."/>
            <person name="Mardis E."/>
            <person name="Dante M."/>
            <person name="Pepin K."/>
            <person name="Hillier L.W."/>
            <person name="Nelson J."/>
            <person name="Spieth J."/>
            <person name="Ryan E."/>
            <person name="Andrews S."/>
            <person name="Geisel C."/>
            <person name="Layman D."/>
            <person name="Du H."/>
            <person name="Ali J."/>
            <person name="Berghoff A."/>
            <person name="Jones K."/>
            <person name="Drone K."/>
            <person name="Cotton M."/>
            <person name="Joshu C."/>
            <person name="Antonoiu B."/>
            <person name="Zidanic M."/>
            <person name="Strong C."/>
            <person name="Sun H."/>
            <person name="Lamar B."/>
            <person name="Yordan C."/>
            <person name="Ma P."/>
            <person name="Zhong J."/>
            <person name="Preston R."/>
            <person name="Vil D."/>
            <person name="Shekher M."/>
            <person name="Matero A."/>
            <person name="Shah R."/>
            <person name="Swaby I.K."/>
            <person name="O'Shaughnessy A."/>
            <person name="Rodriguez M."/>
            <person name="Hoffman J."/>
            <person name="Till S."/>
            <person name="Granat S."/>
            <person name="Shohdy N."/>
            <person name="Hasegawa A."/>
            <person name="Hameed A."/>
            <person name="Lodhi M."/>
            <person name="Johnson A."/>
            <person name="Chen E."/>
            <person name="Marra M.A."/>
            <person name="Martienssen R."/>
            <person name="McCombie W.R."/>
        </authorList>
    </citation>
    <scope>NUCLEOTIDE SEQUENCE [LARGE SCALE GENOMIC DNA]</scope>
    <source>
        <strain>cv. Columbia</strain>
    </source>
</reference>
<reference key="3">
    <citation type="journal article" date="2017" name="Plant J.">
        <title>Araport11: a complete reannotation of the Arabidopsis thaliana reference genome.</title>
        <authorList>
            <person name="Cheng C.Y."/>
            <person name="Krishnakumar V."/>
            <person name="Chan A.P."/>
            <person name="Thibaud-Nissen F."/>
            <person name="Schobel S."/>
            <person name="Town C.D."/>
        </authorList>
    </citation>
    <scope>GENOME REANNOTATION</scope>
    <source>
        <strain>cv. Columbia</strain>
    </source>
</reference>
<reference key="4">
    <citation type="submission" date="2004-09" db="EMBL/GenBank/DDBJ databases">
        <title>Large-scale analysis of RIKEN Arabidopsis full-length (RAFL) cDNAs.</title>
        <authorList>
            <person name="Totoki Y."/>
            <person name="Seki M."/>
            <person name="Ishida J."/>
            <person name="Nakajima M."/>
            <person name="Enju A."/>
            <person name="Kamiya A."/>
            <person name="Narusaka M."/>
            <person name="Shin-i T."/>
            <person name="Nakagawa M."/>
            <person name="Sakamoto N."/>
            <person name="Oishi K."/>
            <person name="Kohara Y."/>
            <person name="Kobayashi M."/>
            <person name="Toyoda A."/>
            <person name="Sakaki Y."/>
            <person name="Sakurai T."/>
            <person name="Iida K."/>
            <person name="Akiyama K."/>
            <person name="Satou M."/>
            <person name="Toyoda T."/>
            <person name="Konagaya A."/>
            <person name="Carninci P."/>
            <person name="Kawai J."/>
            <person name="Hayashizaki Y."/>
            <person name="Shinozaki K."/>
        </authorList>
    </citation>
    <scope>NUCLEOTIDE SEQUENCE [LARGE SCALE MRNA]</scope>
    <source>
        <strain>cv. Columbia</strain>
    </source>
</reference>
<reference key="5">
    <citation type="journal article" date="1997" name="Plant Cell">
        <title>Arabidopsis enhanced disease susceptibility mutants exhibit enhanced susceptibility to several bacterial pathogens and alterations in PR-1 gene expression.</title>
        <authorList>
            <person name="Rogers E.E."/>
            <person name="Ausubel F.M."/>
        </authorList>
    </citation>
    <scope>MUTANT EDS5-1</scope>
    <scope>DISRUPTION PHENOTYPE</scope>
</reference>
<reference key="6">
    <citation type="journal article" date="1999" name="Plant Cell">
        <title>Salicylic acid induction-deficient mutants of Arabidopsis express PR-2 and PR-5 and accumulate high levels of camalexin after pathogen inoculation.</title>
        <authorList>
            <person name="Nawrath C."/>
            <person name="Metraux J.P."/>
        </authorList>
    </citation>
    <scope>MUTANT SID1</scope>
    <scope>DISRUPTION PHENOTYPE</scope>
</reference>
<reference key="7">
    <citation type="journal article" date="2002" name="J. Biol. Chem.">
        <title>Functional cloning and characterization of a plant efflux carrier for multidrug and heavy metal detoxification.</title>
        <authorList>
            <person name="Li L."/>
            <person name="He Z."/>
            <person name="Pandey G.K."/>
            <person name="Tsuchiya T."/>
            <person name="Luan S."/>
        </authorList>
    </citation>
    <scope>GENE FAMILY</scope>
    <scope>NOMENCLATURE</scope>
</reference>
<reference key="8">
    <citation type="journal article" date="2002" name="Plant Cell">
        <title>Age-related resistance in Arabidopsis is a developmentally regulated defense response to Pseudomonas syringae.</title>
        <authorList>
            <person name="Kus J.V."/>
            <person name="Zaton K."/>
            <person name="Sarkar R."/>
            <person name="Cameron R.K."/>
        </authorList>
    </citation>
    <scope>FUNCTION</scope>
    <scope>DISRUPTION PHENOTYPE</scope>
</reference>
<reference key="9">
    <citation type="journal article" date="2003" name="Eur. J. Biochem.">
        <title>The multidrug/oligosaccharidyl-lipid/polysaccharide (MOP) exporter superfamily.</title>
        <authorList>
            <person name="Hvorup R.N."/>
            <person name="Winnen B."/>
            <person name="Chang A.B."/>
            <person name="Jiang Y."/>
            <person name="Zhou X.F."/>
            <person name="Saier M.H. Jr."/>
        </authorList>
    </citation>
    <scope>GENE FAMILY</scope>
</reference>
<reference key="10">
    <citation type="journal article" date="2009" name="Mol. Plant Pathol.">
        <title>Forward and reverse genetics to identify genes involved in the age-related resistance response in Arabidopsis thaliana.</title>
        <authorList>
            <person name="Carviel J.L."/>
            <person name="Al-Daoud F."/>
            <person name="Neumann M."/>
            <person name="Mohammad A."/>
            <person name="Provart N.J."/>
            <person name="Moeder W."/>
            <person name="Yoshioka K."/>
            <person name="Cameron R.K."/>
        </authorList>
    </citation>
    <scope>MUTANT IAP1-1</scope>
    <scope>DISRUPTION PHENOTYPE</scope>
    <scope>FUNCTION</scope>
</reference>
<reference key="11">
    <citation type="journal article" date="2011" name="PLoS Pathog.">
        <title>A genetic screen reveals Arabidopsis stomatal and/or apoplastic defenses against Pseudomonas syringae pv. tomato DC3000.</title>
        <authorList>
            <person name="Zeng W."/>
            <person name="Brutus A."/>
            <person name="Kremer J.M."/>
            <person name="Withers J.C."/>
            <person name="Gao X."/>
            <person name="Jones A.D."/>
            <person name="He S.Y."/>
        </authorList>
    </citation>
    <scope>MUTANT SCORD3</scope>
    <scope>DISRUPTION PHENOTYPE</scope>
</reference>
<reference key="12">
    <citation type="journal article" date="2013" name="Plant Physiol.">
        <title>Export of salicylic acid from the chloroplast requires the multidrug and toxin extrusion-like transporter EDS5.</title>
        <authorList>
            <person name="Serrano M."/>
            <person name="Wang B."/>
            <person name="Aryal B."/>
            <person name="Garcion C."/>
            <person name="Abou-Mansour E."/>
            <person name="Heck S."/>
            <person name="Geisler M."/>
            <person name="Mauch F."/>
            <person name="Nawrath C."/>
            <person name="Metraux J.P."/>
        </authorList>
    </citation>
    <scope>FUNCTION</scope>
    <scope>SUBCELLULAR LOCATION</scope>
</reference>
<reference key="13">
    <citation type="journal article" date="2013" name="Plant Signal. Behav.">
        <title>Chloroplast envelope localization of EDS5, an essential factor for salicylic acid biosynthesis in Arabidopsis thaliana.</title>
        <authorList>
            <person name="Yamasaki K."/>
            <person name="Motomura Y."/>
            <person name="Yagi Y."/>
            <person name="Nomura H."/>
            <person name="Kikuchi S."/>
            <person name="Nakai M."/>
            <person name="Shiina T."/>
        </authorList>
    </citation>
    <scope>SUBCELLULAR LOCATION</scope>
    <scope>TISSUE SPECIFICITY</scope>
</reference>
<reference key="14">
    <citation type="journal article" date="2014" name="PLoS ONE">
        <title>Investigation of intercellular salicylic acid accumulation during compatible and incompatible Arabidopsis-pseudomonas syringae interactions using a fast neutron-generated mutant allele of EDS5 identified by genetic mapping and whole-genome sequencing.</title>
        <authorList>
            <person name="Carviel J.L."/>
            <person name="Wilson D.C."/>
            <person name="Isaacs M."/>
            <person name="Carella P."/>
            <person name="Catana V."/>
            <person name="Golding B."/>
            <person name="Weretilnyk E.A."/>
            <person name="Cameron R.K."/>
        </authorList>
    </citation>
    <scope>FUNCTION</scope>
    <scope>DISRUPTION PHENOTYPE</scope>
</reference>
<accession>Q945F0</accession>
<accession>Q67ZP3</accession>
<accession>Q9SVJ0</accession>
<organism>
    <name type="scientific">Arabidopsis thaliana</name>
    <name type="common">Mouse-ear cress</name>
    <dbReference type="NCBI Taxonomy" id="3702"/>
    <lineage>
        <taxon>Eukaryota</taxon>
        <taxon>Viridiplantae</taxon>
        <taxon>Streptophyta</taxon>
        <taxon>Embryophyta</taxon>
        <taxon>Tracheophyta</taxon>
        <taxon>Spermatophyta</taxon>
        <taxon>Magnoliopsida</taxon>
        <taxon>eudicotyledons</taxon>
        <taxon>Gunneridae</taxon>
        <taxon>Pentapetalae</taxon>
        <taxon>rosids</taxon>
        <taxon>malvids</taxon>
        <taxon>Brassicales</taxon>
        <taxon>Brassicaceae</taxon>
        <taxon>Camelineae</taxon>
        <taxon>Arabidopsis</taxon>
    </lineage>
</organism>